<dbReference type="EMBL" id="DQ279927">
    <property type="protein sequence ID" value="ABB89254.1"/>
    <property type="molecule type" value="Genomic_DNA"/>
</dbReference>
<dbReference type="RefSeq" id="YP_001129474.1">
    <property type="nucleotide sequence ID" value="NC_009334.1"/>
</dbReference>
<dbReference type="RefSeq" id="YP_401680.1">
    <property type="nucleotide sequence ID" value="NC_007605.1"/>
</dbReference>
<dbReference type="PDB" id="7VCQ">
    <property type="method" value="X-ray"/>
    <property type="resolution" value="3.00 A"/>
    <property type="chains" value="K=48-113"/>
</dbReference>
<dbReference type="PDBsum" id="7VCQ"/>
<dbReference type="SMR" id="P0C724"/>
<dbReference type="DNASU" id="3783712"/>
<dbReference type="GeneID" id="3783712"/>
<dbReference type="KEGG" id="vg:3783712"/>
<dbReference type="KEGG" id="vg:5176197"/>
<dbReference type="Proteomes" id="UP000007639">
    <property type="component" value="Genome"/>
</dbReference>
<dbReference type="GO" id="GO:0042025">
    <property type="term" value="C:host cell nucleus"/>
    <property type="evidence" value="ECO:0007669"/>
    <property type="project" value="UniProtKB-SubCell"/>
</dbReference>
<dbReference type="GO" id="GO:0044220">
    <property type="term" value="C:host cell perinuclear region of cytoplasm"/>
    <property type="evidence" value="ECO:0007669"/>
    <property type="project" value="UniProtKB-SubCell"/>
</dbReference>
<dbReference type="GO" id="GO:0019033">
    <property type="term" value="C:viral tegument"/>
    <property type="evidence" value="ECO:0007669"/>
    <property type="project" value="UniProtKB-SubCell"/>
</dbReference>
<reference key="1">
    <citation type="journal article" date="2006" name="Virology">
        <title>The genome of Epstein-Barr virus type 2 strain AG876.</title>
        <authorList>
            <person name="Dolan A."/>
            <person name="Addison C."/>
            <person name="Gatherer D."/>
            <person name="Davison A.J."/>
            <person name="McGeoch D.J."/>
        </authorList>
    </citation>
    <scope>NUCLEOTIDE SEQUENCE [LARGE SCALE GENOMIC DNA]</scope>
</reference>
<accession>P0C724</accession>
<accession>Q777D8</accession>
<protein>
    <recommendedName>
        <fullName>Tegument protein BKRF4</fullName>
    </recommendedName>
</protein>
<name>BKRF4_EBVA8</name>
<organism>
    <name type="scientific">Epstein-Barr virus (strain AG876)</name>
    <name type="common">HHV-4</name>
    <name type="synonym">Human herpesvirus 4</name>
    <dbReference type="NCBI Taxonomy" id="82830"/>
    <lineage>
        <taxon>Viruses</taxon>
        <taxon>Duplodnaviria</taxon>
        <taxon>Heunggongvirae</taxon>
        <taxon>Peploviricota</taxon>
        <taxon>Herviviricetes</taxon>
        <taxon>Herpesvirales</taxon>
        <taxon>Orthoherpesviridae</taxon>
        <taxon>Gammaherpesvirinae</taxon>
        <taxon>Lymphocryptovirus</taxon>
        <taxon>Lymphocryptovirus humangamma4</taxon>
        <taxon>Epstein-Barr virus (strain GD1)</taxon>
    </lineage>
</organism>
<organismHost>
    <name type="scientific">Homo sapiens</name>
    <name type="common">Human</name>
    <dbReference type="NCBI Taxonomy" id="9606"/>
</organismHost>
<proteinExistence type="evidence at protein level"/>
<feature type="chain" id="PRO_0000382443" description="Tegument protein BKRF4">
    <location>
        <begin position="1"/>
        <end position="217"/>
    </location>
</feature>
<feature type="region of interest" description="Disordered" evidence="2">
    <location>
        <begin position="1"/>
        <end position="217"/>
    </location>
</feature>
<feature type="region of interest" description="Interaction with host histones H3/H4" evidence="1">
    <location>
        <begin position="63"/>
        <end position="64"/>
    </location>
</feature>
<feature type="region of interest" description="Interaction with host H2A/H2B" evidence="1">
    <location>
        <begin position="81"/>
        <end position="84"/>
    </location>
</feature>
<feature type="compositionally biased region" description="Polar residues" evidence="2">
    <location>
        <begin position="32"/>
        <end position="42"/>
    </location>
</feature>
<feature type="compositionally biased region" description="Acidic residues" evidence="2">
    <location>
        <begin position="43"/>
        <end position="79"/>
    </location>
</feature>
<feature type="compositionally biased region" description="Acidic residues" evidence="2">
    <location>
        <begin position="89"/>
        <end position="102"/>
    </location>
</feature>
<feature type="compositionally biased region" description="Low complexity" evidence="2">
    <location>
        <begin position="106"/>
        <end position="132"/>
    </location>
</feature>
<feature type="compositionally biased region" description="Pro residues" evidence="2">
    <location>
        <begin position="136"/>
        <end position="145"/>
    </location>
</feature>
<feature type="compositionally biased region" description="Polar residues" evidence="2">
    <location>
        <begin position="208"/>
        <end position="217"/>
    </location>
</feature>
<keyword id="KW-0002">3D-structure</keyword>
<keyword id="KW-0143">Chaperone</keyword>
<keyword id="KW-1035">Host cytoplasm</keyword>
<keyword id="KW-1048">Host nucleus</keyword>
<keyword id="KW-1185">Reference proteome</keyword>
<keyword id="KW-0946">Virion</keyword>
<keyword id="KW-0920">Virion tegument</keyword>
<gene>
    <name type="ORF">BKRF4</name>
</gene>
<evidence type="ECO:0000250" key="1">
    <source>
        <dbReference type="UniProtKB" id="P30117"/>
    </source>
</evidence>
<evidence type="ECO:0000256" key="2">
    <source>
        <dbReference type="SAM" id="MobiDB-lite"/>
    </source>
</evidence>
<evidence type="ECO:0000305" key="3"/>
<comment type="function">
    <text evidence="1">Histone-binding protein that binds to histones H2A/H2B, H3/H4 and cellular chromatin to overcome the host DNA damage response triggered by the viral genome ends. Interferes with histone ubiquitination and recruitment of repair proteins.</text>
</comment>
<comment type="subunit">
    <text evidence="1">Forms a complex with the host H3/H4 dimer and histone chaperone ASF1. Also forms a complex with host H2A/H2B dimer (By similarity). Interacts (via C-terminus) with BGLF2; this interaction is important for infectious virion production (By similarity).</text>
</comment>
<comment type="subcellular location">
    <subcellularLocation>
        <location evidence="1">Virion tegument</location>
    </subcellularLocation>
    <subcellularLocation>
        <location evidence="1">Host nucleus</location>
    </subcellularLocation>
    <subcellularLocation>
        <location evidence="1">Host cytoplasm</location>
        <location evidence="1">Host perinuclear region</location>
    </subcellularLocation>
</comment>
<comment type="domain">
    <text evidence="1">Binds directly to histones through its N-terminal domain.</text>
</comment>
<comment type="similarity">
    <text evidence="3">Belongs to the lymphocryptovirus BKRF4 family.</text>
</comment>
<sequence length="217" mass="23981">MAMFLKSRGVRSCRDRRLLSDEEEETSQSSSYTLGSQASQSIQEEDVSDTDESDYSDEDEEIDLEEEYPSDEDPSEGSDSDPSWHPSDSDESDYSESDEDEATPGSQASRSSRVSPSTQQSSGLTPTPSFSRPRTRAPPRPPAPAPVRGRASAPPRPPAPVQQSTKDKGPHRPTRPVLRGPAPRRPPPPSSPNTYNKHMMETTPPIKGNNNYNWPWL</sequence>